<feature type="chain" id="PRO_0000206120" description="Metal tolerance protein C1">
    <location>
        <begin position="1"/>
        <end position="471"/>
    </location>
</feature>
<feature type="topological domain" description="Cytoplasmic" evidence="2">
    <location>
        <begin position="1"/>
        <end position="78"/>
    </location>
</feature>
<feature type="transmembrane region" description="Helical" evidence="2">
    <location>
        <begin position="79"/>
        <end position="99"/>
    </location>
</feature>
<feature type="topological domain" description="Vacuolar" evidence="2">
    <location>
        <begin position="100"/>
        <end position="101"/>
    </location>
</feature>
<feature type="transmembrane region" description="Helical" evidence="2">
    <location>
        <begin position="102"/>
        <end position="122"/>
    </location>
</feature>
<feature type="topological domain" description="Cytoplasmic" evidence="2">
    <location>
        <begin position="123"/>
        <end position="144"/>
    </location>
</feature>
<feature type="transmembrane region" description="Helical" evidence="2">
    <location>
        <begin position="145"/>
        <end position="165"/>
    </location>
</feature>
<feature type="topological domain" description="Vacuolar" evidence="2">
    <location>
        <begin position="166"/>
        <end position="192"/>
    </location>
</feature>
<feature type="transmembrane region" description="Helical" evidence="2">
    <location>
        <begin position="193"/>
        <end position="213"/>
    </location>
</feature>
<feature type="topological domain" description="Cytoplasmic" evidence="2">
    <location>
        <begin position="214"/>
        <end position="236"/>
    </location>
</feature>
<feature type="transmembrane region" description="Helical" evidence="2">
    <location>
        <begin position="237"/>
        <end position="257"/>
    </location>
</feature>
<feature type="topological domain" description="Vacuolar" evidence="2">
    <location>
        <begin position="258"/>
        <end position="423"/>
    </location>
</feature>
<feature type="transmembrane region" description="Helical" evidence="2">
    <location>
        <begin position="424"/>
        <end position="444"/>
    </location>
</feature>
<feature type="topological domain" description="Cytoplasmic" evidence="2">
    <location>
        <begin position="445"/>
        <end position="471"/>
    </location>
</feature>
<feature type="splice variant" id="VSP_015095" description="In isoform 2." evidence="3">
    <location>
        <begin position="437"/>
        <end position="439"/>
    </location>
</feature>
<comment type="function">
    <text evidence="1">Involved in sequestration of excess metal in the cytoplasm into vacuoles to maintain metal homeostasis.</text>
</comment>
<comment type="subcellular location">
    <subcellularLocation>
        <location evidence="1">Vacuole membrane</location>
        <topology evidence="1">Multi-pass membrane protein</topology>
    </subcellularLocation>
    <text>Tonoplast.</text>
</comment>
<comment type="alternative products">
    <event type="alternative splicing"/>
    <isoform>
        <id>Q8L725-1</id>
        <name>1</name>
        <sequence type="displayed"/>
    </isoform>
    <isoform>
        <id>Q8L725-2</id>
        <name>2</name>
        <sequence type="described" ref="VSP_015095"/>
    </isoform>
</comment>
<comment type="miscellaneous">
    <molecule>Isoform 2</molecule>
    <text evidence="3">May be due to a competing donor splice site.</text>
</comment>
<comment type="similarity">
    <text evidence="3">Belongs to the cation diffusion facilitator (CDF) transporter (TC 2.A.4) family.</text>
</comment>
<comment type="sequence caution" evidence="3">
    <conflict type="erroneous gene model prediction">
        <sequence resource="EMBL-CDS" id="AAC63637"/>
    </conflict>
</comment>
<keyword id="KW-0025">Alternative splicing</keyword>
<keyword id="KW-0472">Membrane</keyword>
<keyword id="KW-1185">Reference proteome</keyword>
<keyword id="KW-0812">Transmembrane</keyword>
<keyword id="KW-1133">Transmembrane helix</keyword>
<keyword id="KW-0813">Transport</keyword>
<keyword id="KW-0926">Vacuole</keyword>
<protein>
    <recommendedName>
        <fullName>Metal tolerance protein C1</fullName>
        <shortName>AtMTPc1</shortName>
    </recommendedName>
    <alternativeName>
        <fullName>AtMTP6</fullName>
    </alternativeName>
</protein>
<organism>
    <name type="scientific">Arabidopsis thaliana</name>
    <name type="common">Mouse-ear cress</name>
    <dbReference type="NCBI Taxonomy" id="3702"/>
    <lineage>
        <taxon>Eukaryota</taxon>
        <taxon>Viridiplantae</taxon>
        <taxon>Streptophyta</taxon>
        <taxon>Embryophyta</taxon>
        <taxon>Tracheophyta</taxon>
        <taxon>Spermatophyta</taxon>
        <taxon>Magnoliopsida</taxon>
        <taxon>eudicotyledons</taxon>
        <taxon>Gunneridae</taxon>
        <taxon>Pentapetalae</taxon>
        <taxon>rosids</taxon>
        <taxon>malvids</taxon>
        <taxon>Brassicales</taxon>
        <taxon>Brassicaceae</taxon>
        <taxon>Camelineae</taxon>
        <taxon>Arabidopsis</taxon>
    </lineage>
</organism>
<reference key="1">
    <citation type="journal article" date="1999" name="Nature">
        <title>Sequence and analysis of chromosome 2 of the plant Arabidopsis thaliana.</title>
        <authorList>
            <person name="Lin X."/>
            <person name="Kaul S."/>
            <person name="Rounsley S.D."/>
            <person name="Shea T.P."/>
            <person name="Benito M.-I."/>
            <person name="Town C.D."/>
            <person name="Fujii C.Y."/>
            <person name="Mason T.M."/>
            <person name="Bowman C.L."/>
            <person name="Barnstead M.E."/>
            <person name="Feldblyum T.V."/>
            <person name="Buell C.R."/>
            <person name="Ketchum K.A."/>
            <person name="Lee J.J."/>
            <person name="Ronning C.M."/>
            <person name="Koo H.L."/>
            <person name="Moffat K.S."/>
            <person name="Cronin L.A."/>
            <person name="Shen M."/>
            <person name="Pai G."/>
            <person name="Van Aken S."/>
            <person name="Umayam L."/>
            <person name="Tallon L.J."/>
            <person name="Gill J.E."/>
            <person name="Adams M.D."/>
            <person name="Carrera A.J."/>
            <person name="Creasy T.H."/>
            <person name="Goodman H.M."/>
            <person name="Somerville C.R."/>
            <person name="Copenhaver G.P."/>
            <person name="Preuss D."/>
            <person name="Nierman W.C."/>
            <person name="White O."/>
            <person name="Eisen J.A."/>
            <person name="Salzberg S.L."/>
            <person name="Fraser C.M."/>
            <person name="Venter J.C."/>
        </authorList>
    </citation>
    <scope>NUCLEOTIDE SEQUENCE [LARGE SCALE GENOMIC DNA]</scope>
    <source>
        <strain>cv. Columbia</strain>
    </source>
</reference>
<reference key="2">
    <citation type="journal article" date="2017" name="Plant J.">
        <title>Araport11: a complete reannotation of the Arabidopsis thaliana reference genome.</title>
        <authorList>
            <person name="Cheng C.Y."/>
            <person name="Krishnakumar V."/>
            <person name="Chan A.P."/>
            <person name="Thibaud-Nissen F."/>
            <person name="Schobel S."/>
            <person name="Town C.D."/>
        </authorList>
    </citation>
    <scope>GENOME REANNOTATION</scope>
    <source>
        <strain>cv. Columbia</strain>
    </source>
</reference>
<reference key="3">
    <citation type="journal article" date="2003" name="Science">
        <title>Empirical analysis of transcriptional activity in the Arabidopsis genome.</title>
        <authorList>
            <person name="Yamada K."/>
            <person name="Lim J."/>
            <person name="Dale J.M."/>
            <person name="Chen H."/>
            <person name="Shinn P."/>
            <person name="Palm C.J."/>
            <person name="Southwick A.M."/>
            <person name="Wu H.C."/>
            <person name="Kim C.J."/>
            <person name="Nguyen M."/>
            <person name="Pham P.K."/>
            <person name="Cheuk R.F."/>
            <person name="Karlin-Newmann G."/>
            <person name="Liu S.X."/>
            <person name="Lam B."/>
            <person name="Sakano H."/>
            <person name="Wu T."/>
            <person name="Yu G."/>
            <person name="Miranda M."/>
            <person name="Quach H.L."/>
            <person name="Tripp M."/>
            <person name="Chang C.H."/>
            <person name="Lee J.M."/>
            <person name="Toriumi M.J."/>
            <person name="Chan M.M."/>
            <person name="Tang C.C."/>
            <person name="Onodera C.S."/>
            <person name="Deng J.M."/>
            <person name="Akiyama K."/>
            <person name="Ansari Y."/>
            <person name="Arakawa T."/>
            <person name="Banh J."/>
            <person name="Banno F."/>
            <person name="Bowser L."/>
            <person name="Brooks S.Y."/>
            <person name="Carninci P."/>
            <person name="Chao Q."/>
            <person name="Choy N."/>
            <person name="Enju A."/>
            <person name="Goldsmith A.D."/>
            <person name="Gurjal M."/>
            <person name="Hansen N.F."/>
            <person name="Hayashizaki Y."/>
            <person name="Johnson-Hopson C."/>
            <person name="Hsuan V.W."/>
            <person name="Iida K."/>
            <person name="Karnes M."/>
            <person name="Khan S."/>
            <person name="Koesema E."/>
            <person name="Ishida J."/>
            <person name="Jiang P.X."/>
            <person name="Jones T."/>
            <person name="Kawai J."/>
            <person name="Kamiya A."/>
            <person name="Meyers C."/>
            <person name="Nakajima M."/>
            <person name="Narusaka M."/>
            <person name="Seki M."/>
            <person name="Sakurai T."/>
            <person name="Satou M."/>
            <person name="Tamse R."/>
            <person name="Vaysberg M."/>
            <person name="Wallender E.K."/>
            <person name="Wong C."/>
            <person name="Yamamura Y."/>
            <person name="Yuan S."/>
            <person name="Shinozaki K."/>
            <person name="Davis R.W."/>
            <person name="Theologis A."/>
            <person name="Ecker J.R."/>
        </authorList>
    </citation>
    <scope>NUCLEOTIDE SEQUENCE [LARGE SCALE MRNA] (ISOFORM 1)</scope>
    <source>
        <strain>cv. Columbia</strain>
    </source>
</reference>
<reference key="4">
    <citation type="journal article" date="2001" name="Plant Physiol.">
        <title>Phylogenetic relationships within cation transporter families of Arabidopsis.</title>
        <authorList>
            <person name="Maeser P."/>
            <person name="Thomine S."/>
            <person name="Schroeder J.I."/>
            <person name="Ward J.M."/>
            <person name="Hirschi K."/>
            <person name="Sze H."/>
            <person name="Talke I.N."/>
            <person name="Amtmann A."/>
            <person name="Maathuis F.J.M."/>
            <person name="Sanders D."/>
            <person name="Harper J.F."/>
            <person name="Tchieu J."/>
            <person name="Gribskov M."/>
            <person name="Persans M.W."/>
            <person name="Salt D.E."/>
            <person name="Kim S.A."/>
            <person name="Guerinot M.L."/>
        </authorList>
    </citation>
    <scope>GENE FAMILY</scope>
    <scope>NOMENCLATURE</scope>
</reference>
<evidence type="ECO:0000250" key="1"/>
<evidence type="ECO:0000255" key="2"/>
<evidence type="ECO:0000305" key="3"/>
<accession>Q8L725</accession>
<accession>O82250</accession>
<sequence>MGIIRFQILNPTRICRSTIYYMSCRYLPSSSSSSSPLRVSSSSSQKPSFDFSRRWHFGHPDHHQQYQKPGEEGEKIFRLGLTADIGLSVAKALTGYLCGSTAIIADAAHSVSDVVLSGVALVSYRAANVPKDKEHPYGHGKFETLGALGISAMLLATGSGIAWHALDLLSIALSAAPEVIHSGHHHGIDMNHPILALTVTIASISIKEGLYWITKRAGEKQGSGLMMANAWHHRSDAISSLVALVGVGGSILGVNFLDPLAGLVVSTMIVNAGLKTGHQSILELVDAAIPAQQLEPIRQTILQVEGVKGCHRLRGRRAGSSLYLDVHIVVDPFSSVSVAHEVGEYVRRQINLNHPEVSEVFIHIDPAFLQFSCSTKDHDSITKESNICQEIKHVEATVSDIFSSQLSEKLTIKRITPHLLHSKILLQIVVAMPSTMSIQDVMIAAEHAEKEILKAAPNVARVSIQLSLNSE</sequence>
<proteinExistence type="evidence at transcript level"/>
<gene>
    <name type="primary">MTPC1</name>
    <name type="synonym">MTP6</name>
    <name type="ordered locus">At2g47830</name>
    <name type="ORF">F17A22.22</name>
</gene>
<name>MTPC1_ARATH</name>
<dbReference type="EMBL" id="AC005309">
    <property type="protein sequence ID" value="AAC63637.1"/>
    <property type="status" value="ALT_SEQ"/>
    <property type="molecule type" value="Genomic_DNA"/>
</dbReference>
<dbReference type="EMBL" id="CP002685">
    <property type="protein sequence ID" value="AEC10893.1"/>
    <property type="molecule type" value="Genomic_DNA"/>
</dbReference>
<dbReference type="EMBL" id="AY139998">
    <property type="protein sequence ID" value="AAM98140.1"/>
    <property type="molecule type" value="mRNA"/>
</dbReference>
<dbReference type="EMBL" id="BT006611">
    <property type="protein sequence ID" value="AAP31955.1"/>
    <property type="molecule type" value="mRNA"/>
</dbReference>
<dbReference type="PIR" id="A84920">
    <property type="entry name" value="A84920"/>
</dbReference>
<dbReference type="RefSeq" id="NP_182304.2">
    <molecule id="Q8L725-1"/>
    <property type="nucleotide sequence ID" value="NM_130350.3"/>
</dbReference>
<dbReference type="SMR" id="Q8L725"/>
<dbReference type="FunCoup" id="Q8L725">
    <property type="interactions" value="819"/>
</dbReference>
<dbReference type="STRING" id="3702.Q8L725"/>
<dbReference type="TCDB" id="2.A.4.7.2">
    <property type="family name" value="the cation diffusion facilitator (cdf) family"/>
</dbReference>
<dbReference type="iPTMnet" id="Q8L725"/>
<dbReference type="PaxDb" id="3702-AT2G47830.1"/>
<dbReference type="EnsemblPlants" id="AT2G47830.1">
    <molecule id="Q8L725-1"/>
    <property type="protein sequence ID" value="AT2G47830.1"/>
    <property type="gene ID" value="AT2G47830"/>
</dbReference>
<dbReference type="GeneID" id="819395"/>
<dbReference type="Gramene" id="AT2G47830.1">
    <molecule id="Q8L725-1"/>
    <property type="protein sequence ID" value="AT2G47830.1"/>
    <property type="gene ID" value="AT2G47830"/>
</dbReference>
<dbReference type="KEGG" id="ath:AT2G47830"/>
<dbReference type="Araport" id="AT2G47830"/>
<dbReference type="TAIR" id="AT2G47830"/>
<dbReference type="eggNOG" id="KOG1485">
    <property type="taxonomic scope" value="Eukaryota"/>
</dbReference>
<dbReference type="InParanoid" id="Q8L725"/>
<dbReference type="OMA" id="IVNFHCR"/>
<dbReference type="PhylomeDB" id="Q8L725"/>
<dbReference type="PRO" id="PR:Q8L725"/>
<dbReference type="Proteomes" id="UP000006548">
    <property type="component" value="Chromosome 2"/>
</dbReference>
<dbReference type="ExpressionAtlas" id="Q8L725">
    <property type="expression patterns" value="baseline and differential"/>
</dbReference>
<dbReference type="GO" id="GO:0005774">
    <property type="term" value="C:vacuolar membrane"/>
    <property type="evidence" value="ECO:0007669"/>
    <property type="project" value="UniProtKB-SubCell"/>
</dbReference>
<dbReference type="GO" id="GO:0008324">
    <property type="term" value="F:monoatomic cation transmembrane transporter activity"/>
    <property type="evidence" value="ECO:0007669"/>
    <property type="project" value="InterPro"/>
</dbReference>
<dbReference type="FunFam" id="1.20.1510.10:FF:000023">
    <property type="entry name" value="Metal tolerance protein C1"/>
    <property type="match status" value="1"/>
</dbReference>
<dbReference type="FunFam" id="3.30.70.1350:FF:000008">
    <property type="entry name" value="Metal tolerance protein C1"/>
    <property type="match status" value="1"/>
</dbReference>
<dbReference type="Gene3D" id="1.20.1510.10">
    <property type="entry name" value="Cation efflux protein transmembrane domain"/>
    <property type="match status" value="1"/>
</dbReference>
<dbReference type="Gene3D" id="3.30.70.1350">
    <property type="entry name" value="Cation efflux protein, cytoplasmic domain"/>
    <property type="match status" value="1"/>
</dbReference>
<dbReference type="InterPro" id="IPR002524">
    <property type="entry name" value="Cation_efflux"/>
</dbReference>
<dbReference type="InterPro" id="IPR027470">
    <property type="entry name" value="Cation_efflux_CTD"/>
</dbReference>
<dbReference type="InterPro" id="IPR036837">
    <property type="entry name" value="Cation_efflux_CTD_sf"/>
</dbReference>
<dbReference type="InterPro" id="IPR027469">
    <property type="entry name" value="Cation_efflux_TMD_sf"/>
</dbReference>
<dbReference type="InterPro" id="IPR050291">
    <property type="entry name" value="CDF_Transporter"/>
</dbReference>
<dbReference type="NCBIfam" id="TIGR01297">
    <property type="entry name" value="CDF"/>
    <property type="match status" value="1"/>
</dbReference>
<dbReference type="PANTHER" id="PTHR43840">
    <property type="entry name" value="MITOCHONDRIAL METAL TRANSPORTER 1-RELATED"/>
    <property type="match status" value="1"/>
</dbReference>
<dbReference type="PANTHER" id="PTHR43840:SF15">
    <property type="entry name" value="MITOCHONDRIAL METAL TRANSPORTER 1-RELATED"/>
    <property type="match status" value="1"/>
</dbReference>
<dbReference type="Pfam" id="PF01545">
    <property type="entry name" value="Cation_efflux"/>
    <property type="match status" value="1"/>
</dbReference>
<dbReference type="Pfam" id="PF16916">
    <property type="entry name" value="ZT_dimer"/>
    <property type="match status" value="1"/>
</dbReference>
<dbReference type="SUPFAM" id="SSF160240">
    <property type="entry name" value="Cation efflux protein cytoplasmic domain-like"/>
    <property type="match status" value="1"/>
</dbReference>
<dbReference type="SUPFAM" id="SSF161111">
    <property type="entry name" value="Cation efflux protein transmembrane domain-like"/>
    <property type="match status" value="1"/>
</dbReference>